<reference key="1">
    <citation type="submission" date="2007-11" db="EMBL/GenBank/DDBJ databases">
        <title>Complete sequence of Delftia acidovorans DSM 14801 / SPH-1.</title>
        <authorList>
            <person name="Copeland A."/>
            <person name="Lucas S."/>
            <person name="Lapidus A."/>
            <person name="Barry K."/>
            <person name="Glavina del Rio T."/>
            <person name="Dalin E."/>
            <person name="Tice H."/>
            <person name="Pitluck S."/>
            <person name="Lowry S."/>
            <person name="Clum A."/>
            <person name="Schmutz J."/>
            <person name="Larimer F."/>
            <person name="Land M."/>
            <person name="Hauser L."/>
            <person name="Kyrpides N."/>
            <person name="Kim E."/>
            <person name="Schleheck D."/>
            <person name="Richardson P."/>
        </authorList>
    </citation>
    <scope>NUCLEOTIDE SEQUENCE [LARGE SCALE GENOMIC DNA]</scope>
    <source>
        <strain>DSM 14801 / SPH-1</strain>
    </source>
</reference>
<feature type="chain" id="PRO_1000121210" description="DNA-directed RNA polymerase subunit omega">
    <location>
        <begin position="1"/>
        <end position="67"/>
    </location>
</feature>
<organism>
    <name type="scientific">Delftia acidovorans (strain DSM 14801 / SPH-1)</name>
    <dbReference type="NCBI Taxonomy" id="398578"/>
    <lineage>
        <taxon>Bacteria</taxon>
        <taxon>Pseudomonadati</taxon>
        <taxon>Pseudomonadota</taxon>
        <taxon>Betaproteobacteria</taxon>
        <taxon>Burkholderiales</taxon>
        <taxon>Comamonadaceae</taxon>
        <taxon>Delftia</taxon>
    </lineage>
</organism>
<protein>
    <recommendedName>
        <fullName evidence="1">DNA-directed RNA polymerase subunit omega</fullName>
        <shortName evidence="1">RNAP omega subunit</shortName>
        <ecNumber evidence="1">2.7.7.6</ecNumber>
    </recommendedName>
    <alternativeName>
        <fullName evidence="1">RNA polymerase omega subunit</fullName>
    </alternativeName>
    <alternativeName>
        <fullName evidence="1">Transcriptase subunit omega</fullName>
    </alternativeName>
</protein>
<comment type="function">
    <text evidence="1">Promotes RNA polymerase assembly. Latches the N- and C-terminal regions of the beta' subunit thereby facilitating its interaction with the beta and alpha subunits.</text>
</comment>
<comment type="catalytic activity">
    <reaction evidence="1">
        <text>RNA(n) + a ribonucleoside 5'-triphosphate = RNA(n+1) + diphosphate</text>
        <dbReference type="Rhea" id="RHEA:21248"/>
        <dbReference type="Rhea" id="RHEA-COMP:14527"/>
        <dbReference type="Rhea" id="RHEA-COMP:17342"/>
        <dbReference type="ChEBI" id="CHEBI:33019"/>
        <dbReference type="ChEBI" id="CHEBI:61557"/>
        <dbReference type="ChEBI" id="CHEBI:140395"/>
        <dbReference type="EC" id="2.7.7.6"/>
    </reaction>
</comment>
<comment type="subunit">
    <text evidence="1">The RNAP catalytic core consists of 2 alpha, 1 beta, 1 beta' and 1 omega subunit. When a sigma factor is associated with the core the holoenzyme is formed, which can initiate transcription.</text>
</comment>
<comment type="similarity">
    <text evidence="1">Belongs to the RNA polymerase subunit omega family.</text>
</comment>
<accession>A9BTA2</accession>
<name>RPOZ_DELAS</name>
<sequence>MARITVEDCLEQIPNRFQLVLAATYRARMLSQGHTPRIETKNKPGVTALREIAEGKVGLEMLKKVPG</sequence>
<proteinExistence type="inferred from homology"/>
<gene>
    <name evidence="1" type="primary">rpoZ</name>
    <name type="ordered locus">Daci_2027</name>
</gene>
<dbReference type="EC" id="2.7.7.6" evidence="1"/>
<dbReference type="EMBL" id="CP000884">
    <property type="protein sequence ID" value="ABX34667.1"/>
    <property type="molecule type" value="Genomic_DNA"/>
</dbReference>
<dbReference type="RefSeq" id="WP_012203952.1">
    <property type="nucleotide sequence ID" value="NC_010002.1"/>
</dbReference>
<dbReference type="SMR" id="A9BTA2"/>
<dbReference type="STRING" id="398578.Daci_2027"/>
<dbReference type="GeneID" id="24116554"/>
<dbReference type="KEGG" id="dac:Daci_2027"/>
<dbReference type="eggNOG" id="COG1758">
    <property type="taxonomic scope" value="Bacteria"/>
</dbReference>
<dbReference type="HOGENOM" id="CLU_125406_5_1_4"/>
<dbReference type="Proteomes" id="UP000000784">
    <property type="component" value="Chromosome"/>
</dbReference>
<dbReference type="GO" id="GO:0000428">
    <property type="term" value="C:DNA-directed RNA polymerase complex"/>
    <property type="evidence" value="ECO:0007669"/>
    <property type="project" value="UniProtKB-KW"/>
</dbReference>
<dbReference type="GO" id="GO:0003677">
    <property type="term" value="F:DNA binding"/>
    <property type="evidence" value="ECO:0007669"/>
    <property type="project" value="UniProtKB-UniRule"/>
</dbReference>
<dbReference type="GO" id="GO:0003899">
    <property type="term" value="F:DNA-directed RNA polymerase activity"/>
    <property type="evidence" value="ECO:0007669"/>
    <property type="project" value="UniProtKB-UniRule"/>
</dbReference>
<dbReference type="GO" id="GO:0006351">
    <property type="term" value="P:DNA-templated transcription"/>
    <property type="evidence" value="ECO:0007669"/>
    <property type="project" value="UniProtKB-UniRule"/>
</dbReference>
<dbReference type="Gene3D" id="3.90.940.10">
    <property type="match status" value="1"/>
</dbReference>
<dbReference type="HAMAP" id="MF_00366">
    <property type="entry name" value="RNApol_bact_RpoZ"/>
    <property type="match status" value="1"/>
</dbReference>
<dbReference type="InterPro" id="IPR003716">
    <property type="entry name" value="DNA-dir_RNA_pol_omega"/>
</dbReference>
<dbReference type="InterPro" id="IPR006110">
    <property type="entry name" value="Pol_omega/Rpo6/RPB6"/>
</dbReference>
<dbReference type="InterPro" id="IPR036161">
    <property type="entry name" value="RPB6/omega-like_sf"/>
</dbReference>
<dbReference type="NCBIfam" id="TIGR00690">
    <property type="entry name" value="rpoZ"/>
    <property type="match status" value="1"/>
</dbReference>
<dbReference type="PANTHER" id="PTHR34476">
    <property type="entry name" value="DNA-DIRECTED RNA POLYMERASE SUBUNIT OMEGA"/>
    <property type="match status" value="1"/>
</dbReference>
<dbReference type="PANTHER" id="PTHR34476:SF1">
    <property type="entry name" value="DNA-DIRECTED RNA POLYMERASE SUBUNIT OMEGA"/>
    <property type="match status" value="1"/>
</dbReference>
<dbReference type="Pfam" id="PF01192">
    <property type="entry name" value="RNA_pol_Rpb6"/>
    <property type="match status" value="1"/>
</dbReference>
<dbReference type="SMART" id="SM01409">
    <property type="entry name" value="RNA_pol_Rpb6"/>
    <property type="match status" value="1"/>
</dbReference>
<dbReference type="SUPFAM" id="SSF63562">
    <property type="entry name" value="RPB6/omega subunit-like"/>
    <property type="match status" value="1"/>
</dbReference>
<evidence type="ECO:0000255" key="1">
    <source>
        <dbReference type="HAMAP-Rule" id="MF_00366"/>
    </source>
</evidence>
<keyword id="KW-0240">DNA-directed RNA polymerase</keyword>
<keyword id="KW-0548">Nucleotidyltransferase</keyword>
<keyword id="KW-1185">Reference proteome</keyword>
<keyword id="KW-0804">Transcription</keyword>
<keyword id="KW-0808">Transferase</keyword>